<sequence length="130" mass="14117">MASVDVSQNTSDIHFSVSAADKVAELIKEEDNSNLNLRVSITGGGCSGFQYGFSFDEQINDDDTIIIQQCSDGKSSVKLLIDSMSYQYLHDAEIDYIKGIQGEQFVIRNPNAKTTCGCGSSFSIGDEDVL</sequence>
<keyword id="KW-0408">Iron</keyword>
<keyword id="KW-0411">Iron-sulfur</keyword>
<keyword id="KW-0479">Metal-binding</keyword>
<gene>
    <name evidence="1" type="primary">erpA</name>
    <name type="ordered locus">lpp1343</name>
</gene>
<name>ERPA_LEGPA</name>
<organism>
    <name type="scientific">Legionella pneumophila (strain Paris)</name>
    <dbReference type="NCBI Taxonomy" id="297246"/>
    <lineage>
        <taxon>Bacteria</taxon>
        <taxon>Pseudomonadati</taxon>
        <taxon>Pseudomonadota</taxon>
        <taxon>Gammaproteobacteria</taxon>
        <taxon>Legionellales</taxon>
        <taxon>Legionellaceae</taxon>
        <taxon>Legionella</taxon>
    </lineage>
</organism>
<accession>Q5X5H7</accession>
<feature type="chain" id="PRO_0000311499" description="Iron-sulfur cluster insertion protein ErpA">
    <location>
        <begin position="1"/>
        <end position="130"/>
    </location>
</feature>
<feature type="binding site" evidence="1">
    <location>
        <position position="46"/>
    </location>
    <ligand>
        <name>iron-sulfur cluster</name>
        <dbReference type="ChEBI" id="CHEBI:30408"/>
    </ligand>
</feature>
<feature type="binding site" evidence="1">
    <location>
        <position position="116"/>
    </location>
    <ligand>
        <name>iron-sulfur cluster</name>
        <dbReference type="ChEBI" id="CHEBI:30408"/>
    </ligand>
</feature>
<feature type="binding site" evidence="1">
    <location>
        <position position="118"/>
    </location>
    <ligand>
        <name>iron-sulfur cluster</name>
        <dbReference type="ChEBI" id="CHEBI:30408"/>
    </ligand>
</feature>
<protein>
    <recommendedName>
        <fullName evidence="1">Iron-sulfur cluster insertion protein ErpA</fullName>
    </recommendedName>
</protein>
<comment type="function">
    <text evidence="1">Required for insertion of 4Fe-4S clusters for at least IspG.</text>
</comment>
<comment type="cofactor">
    <cofactor evidence="1">
        <name>iron-sulfur cluster</name>
        <dbReference type="ChEBI" id="CHEBI:30408"/>
    </cofactor>
    <text evidence="1">Binds 1 iron-sulfur cluster per subunit.</text>
</comment>
<comment type="subunit">
    <text evidence="1">Homodimer.</text>
</comment>
<comment type="similarity">
    <text evidence="1">Belongs to the HesB/IscA family.</text>
</comment>
<reference key="1">
    <citation type="journal article" date="2004" name="Nat. Genet.">
        <title>Evidence in the Legionella pneumophila genome for exploitation of host cell functions and high genome plasticity.</title>
        <authorList>
            <person name="Cazalet C."/>
            <person name="Rusniok C."/>
            <person name="Brueggemann H."/>
            <person name="Zidane N."/>
            <person name="Magnier A."/>
            <person name="Ma L."/>
            <person name="Tichit M."/>
            <person name="Jarraud S."/>
            <person name="Bouchier C."/>
            <person name="Vandenesch F."/>
            <person name="Kunst F."/>
            <person name="Etienne J."/>
            <person name="Glaser P."/>
            <person name="Buchrieser C."/>
        </authorList>
    </citation>
    <scope>NUCLEOTIDE SEQUENCE [LARGE SCALE GENOMIC DNA]</scope>
    <source>
        <strain>Paris</strain>
    </source>
</reference>
<evidence type="ECO:0000255" key="1">
    <source>
        <dbReference type="HAMAP-Rule" id="MF_01380"/>
    </source>
</evidence>
<proteinExistence type="inferred from homology"/>
<dbReference type="EMBL" id="CR628336">
    <property type="protein sequence ID" value="CAH12494.1"/>
    <property type="molecule type" value="Genomic_DNA"/>
</dbReference>
<dbReference type="RefSeq" id="WP_011213683.1">
    <property type="nucleotide sequence ID" value="NC_006368.1"/>
</dbReference>
<dbReference type="SMR" id="Q5X5H7"/>
<dbReference type="KEGG" id="lpp:lpp1343"/>
<dbReference type="LegioList" id="lpp1343"/>
<dbReference type="HOGENOM" id="CLU_069054_5_3_6"/>
<dbReference type="GO" id="GO:0051537">
    <property type="term" value="F:2 iron, 2 sulfur cluster binding"/>
    <property type="evidence" value="ECO:0007669"/>
    <property type="project" value="TreeGrafter"/>
</dbReference>
<dbReference type="GO" id="GO:0051539">
    <property type="term" value="F:4 iron, 4 sulfur cluster binding"/>
    <property type="evidence" value="ECO:0007669"/>
    <property type="project" value="TreeGrafter"/>
</dbReference>
<dbReference type="GO" id="GO:0005506">
    <property type="term" value="F:iron ion binding"/>
    <property type="evidence" value="ECO:0007669"/>
    <property type="project" value="UniProtKB-UniRule"/>
</dbReference>
<dbReference type="GO" id="GO:0016226">
    <property type="term" value="P:iron-sulfur cluster assembly"/>
    <property type="evidence" value="ECO:0007669"/>
    <property type="project" value="UniProtKB-UniRule"/>
</dbReference>
<dbReference type="FunFam" id="2.60.300.12:FF:000002">
    <property type="entry name" value="Iron-sulfur cluster insertion protein ErpA"/>
    <property type="match status" value="1"/>
</dbReference>
<dbReference type="Gene3D" id="2.60.300.12">
    <property type="entry name" value="HesB-like domain"/>
    <property type="match status" value="1"/>
</dbReference>
<dbReference type="HAMAP" id="MF_01380">
    <property type="entry name" value="Fe_S_insert_ErpA"/>
    <property type="match status" value="1"/>
</dbReference>
<dbReference type="InterPro" id="IPR000361">
    <property type="entry name" value="FeS_biogenesis"/>
</dbReference>
<dbReference type="InterPro" id="IPR016092">
    <property type="entry name" value="FeS_cluster_insertion"/>
</dbReference>
<dbReference type="InterPro" id="IPR017870">
    <property type="entry name" value="FeS_cluster_insertion_CS"/>
</dbReference>
<dbReference type="InterPro" id="IPR023063">
    <property type="entry name" value="FeS_cluster_insertion_RrpA"/>
</dbReference>
<dbReference type="InterPro" id="IPR035903">
    <property type="entry name" value="HesB-like_dom_sf"/>
</dbReference>
<dbReference type="NCBIfam" id="TIGR00049">
    <property type="entry name" value="iron-sulfur cluster assembly accessory protein"/>
    <property type="match status" value="1"/>
</dbReference>
<dbReference type="NCBIfam" id="NF010147">
    <property type="entry name" value="PRK13623.1"/>
    <property type="match status" value="1"/>
</dbReference>
<dbReference type="PANTHER" id="PTHR43011">
    <property type="entry name" value="IRON-SULFUR CLUSTER ASSEMBLY 2 HOMOLOG, MITOCHONDRIAL"/>
    <property type="match status" value="1"/>
</dbReference>
<dbReference type="PANTHER" id="PTHR43011:SF1">
    <property type="entry name" value="IRON-SULFUR CLUSTER ASSEMBLY 2 HOMOLOG, MITOCHONDRIAL"/>
    <property type="match status" value="1"/>
</dbReference>
<dbReference type="Pfam" id="PF01521">
    <property type="entry name" value="Fe-S_biosyn"/>
    <property type="match status" value="1"/>
</dbReference>
<dbReference type="SUPFAM" id="SSF89360">
    <property type="entry name" value="HesB-like domain"/>
    <property type="match status" value="1"/>
</dbReference>
<dbReference type="PROSITE" id="PS01152">
    <property type="entry name" value="HESB"/>
    <property type="match status" value="1"/>
</dbReference>